<keyword id="KW-0378">Hydrolase</keyword>
<feature type="chain" id="PRO_1000044959" description="N(4)-acetylcytidine amidohydrolase">
    <location>
        <begin position="1"/>
        <end position="103"/>
    </location>
</feature>
<feature type="domain" description="ASCH" evidence="1">
    <location>
        <begin position="7"/>
        <end position="93"/>
    </location>
</feature>
<feature type="active site" description="Proton acceptor" evidence="2">
    <location>
        <position position="21"/>
    </location>
</feature>
<feature type="active site" description="Nucleophile" evidence="2">
    <location>
        <position position="24"/>
    </location>
</feature>
<feature type="active site" description="Proton donor" evidence="2">
    <location>
        <position position="74"/>
    </location>
</feature>
<organism>
    <name type="scientific">Shewanella sp. (strain W3-18-1)</name>
    <dbReference type="NCBI Taxonomy" id="351745"/>
    <lineage>
        <taxon>Bacteria</taxon>
        <taxon>Pseudomonadati</taxon>
        <taxon>Pseudomonadota</taxon>
        <taxon>Gammaproteobacteria</taxon>
        <taxon>Alteromonadales</taxon>
        <taxon>Shewanellaceae</taxon>
        <taxon>Shewanella</taxon>
    </lineage>
</organism>
<evidence type="ECO:0000255" key="1"/>
<evidence type="ECO:0000255" key="2">
    <source>
        <dbReference type="HAMAP-Rule" id="MF_00684"/>
    </source>
</evidence>
<name>AC4CH_SHESW</name>
<sequence>MLLSKITFFERFEQDILSGAKTITLRDETESHVVAGQILPVSTFETDRWFCDIQIIDVMPVKLTELTDVHAEQENMTLPQLRSVIAEIYPGLEQLYMISFVVL</sequence>
<dbReference type="EC" id="3.5.1.135" evidence="2"/>
<dbReference type="EMBL" id="CP000503">
    <property type="protein sequence ID" value="ABM24567.1"/>
    <property type="molecule type" value="Genomic_DNA"/>
</dbReference>
<dbReference type="SMR" id="A1RIS2"/>
<dbReference type="KEGG" id="shw:Sputw3181_1730"/>
<dbReference type="HOGENOM" id="CLU_152586_0_0_6"/>
<dbReference type="Proteomes" id="UP000002597">
    <property type="component" value="Chromosome"/>
</dbReference>
<dbReference type="GO" id="GO:0005829">
    <property type="term" value="C:cytosol"/>
    <property type="evidence" value="ECO:0007669"/>
    <property type="project" value="TreeGrafter"/>
</dbReference>
<dbReference type="GO" id="GO:0016813">
    <property type="term" value="F:hydrolase activity, acting on carbon-nitrogen (but not peptide) bonds, in linear amidines"/>
    <property type="evidence" value="ECO:0007669"/>
    <property type="project" value="UniProtKB-UniRule"/>
</dbReference>
<dbReference type="GO" id="GO:0106251">
    <property type="term" value="F:N4-acetylcytidine amidohydrolase activity"/>
    <property type="evidence" value="ECO:0007669"/>
    <property type="project" value="RHEA"/>
</dbReference>
<dbReference type="CDD" id="cd06552">
    <property type="entry name" value="ASCH_yqfb_like"/>
    <property type="match status" value="1"/>
</dbReference>
<dbReference type="Gene3D" id="2.30.130.30">
    <property type="entry name" value="Hypothetical protein"/>
    <property type="match status" value="1"/>
</dbReference>
<dbReference type="HAMAP" id="MF_00684">
    <property type="entry name" value="ac4C_amidohydr"/>
    <property type="match status" value="1"/>
</dbReference>
<dbReference type="InterPro" id="IPR008314">
    <property type="entry name" value="AC4CH"/>
</dbReference>
<dbReference type="InterPro" id="IPR007374">
    <property type="entry name" value="ASCH_domain"/>
</dbReference>
<dbReference type="InterPro" id="IPR015947">
    <property type="entry name" value="PUA-like_sf"/>
</dbReference>
<dbReference type="NCBIfam" id="NF003443">
    <property type="entry name" value="PRK04980.1"/>
    <property type="match status" value="1"/>
</dbReference>
<dbReference type="PANTHER" id="PTHR38088">
    <property type="entry name" value="UCP029143 FAMILY PROTEIN"/>
    <property type="match status" value="1"/>
</dbReference>
<dbReference type="PANTHER" id="PTHR38088:SF2">
    <property type="entry name" value="UCP029143 FAMILY PROTEIN"/>
    <property type="match status" value="1"/>
</dbReference>
<dbReference type="Pfam" id="PF04266">
    <property type="entry name" value="ASCH"/>
    <property type="match status" value="1"/>
</dbReference>
<dbReference type="PIRSF" id="PIRSF029143">
    <property type="entry name" value="UCP029143"/>
    <property type="match status" value="1"/>
</dbReference>
<dbReference type="SMART" id="SM01022">
    <property type="entry name" value="ASCH"/>
    <property type="match status" value="1"/>
</dbReference>
<dbReference type="SUPFAM" id="SSF88697">
    <property type="entry name" value="PUA domain-like"/>
    <property type="match status" value="1"/>
</dbReference>
<protein>
    <recommendedName>
        <fullName evidence="2">N(4)-acetylcytidine amidohydrolase</fullName>
        <shortName evidence="2">ac4C amidohydrolase</shortName>
        <ecNumber evidence="2">3.5.1.135</ecNumber>
    </recommendedName>
</protein>
<reference key="1">
    <citation type="submission" date="2006-12" db="EMBL/GenBank/DDBJ databases">
        <title>Complete sequence of Shewanella sp. W3-18-1.</title>
        <authorList>
            <consortium name="US DOE Joint Genome Institute"/>
            <person name="Copeland A."/>
            <person name="Lucas S."/>
            <person name="Lapidus A."/>
            <person name="Barry K."/>
            <person name="Detter J.C."/>
            <person name="Glavina del Rio T."/>
            <person name="Hammon N."/>
            <person name="Israni S."/>
            <person name="Dalin E."/>
            <person name="Tice H."/>
            <person name="Pitluck S."/>
            <person name="Chain P."/>
            <person name="Malfatti S."/>
            <person name="Shin M."/>
            <person name="Vergez L."/>
            <person name="Schmutz J."/>
            <person name="Larimer F."/>
            <person name="Land M."/>
            <person name="Hauser L."/>
            <person name="Kyrpides N."/>
            <person name="Lykidis A."/>
            <person name="Tiedje J."/>
            <person name="Richardson P."/>
        </authorList>
    </citation>
    <scope>NUCLEOTIDE SEQUENCE [LARGE SCALE GENOMIC DNA]</scope>
    <source>
        <strain>W3-18-1</strain>
    </source>
</reference>
<comment type="function">
    <text evidence="2">Catalyzes the hydrolysis of N(4)-acetylcytidine (ac4C).</text>
</comment>
<comment type="catalytic activity">
    <reaction evidence="2">
        <text>N(4)-acetylcytidine + H2O = cytidine + acetate + H(+)</text>
        <dbReference type="Rhea" id="RHEA:62932"/>
        <dbReference type="ChEBI" id="CHEBI:15377"/>
        <dbReference type="ChEBI" id="CHEBI:15378"/>
        <dbReference type="ChEBI" id="CHEBI:17562"/>
        <dbReference type="ChEBI" id="CHEBI:30089"/>
        <dbReference type="ChEBI" id="CHEBI:70989"/>
        <dbReference type="EC" id="3.5.1.135"/>
    </reaction>
</comment>
<comment type="catalytic activity">
    <reaction evidence="2">
        <text>N(4)-acetyl-2'-deoxycytidine + H2O = 2'-deoxycytidine + acetate + H(+)</text>
        <dbReference type="Rhea" id="RHEA:62936"/>
        <dbReference type="ChEBI" id="CHEBI:15377"/>
        <dbReference type="ChEBI" id="CHEBI:15378"/>
        <dbReference type="ChEBI" id="CHEBI:15698"/>
        <dbReference type="ChEBI" id="CHEBI:30089"/>
        <dbReference type="ChEBI" id="CHEBI:146133"/>
        <dbReference type="EC" id="3.5.1.135"/>
    </reaction>
</comment>
<comment type="catalytic activity">
    <reaction evidence="2">
        <text>N(4)-acetylcytosine + H2O = cytosine + acetate + H(+)</text>
        <dbReference type="Rhea" id="RHEA:62940"/>
        <dbReference type="ChEBI" id="CHEBI:15377"/>
        <dbReference type="ChEBI" id="CHEBI:15378"/>
        <dbReference type="ChEBI" id="CHEBI:16040"/>
        <dbReference type="ChEBI" id="CHEBI:30089"/>
        <dbReference type="ChEBI" id="CHEBI:146134"/>
        <dbReference type="EC" id="3.5.1.135"/>
    </reaction>
</comment>
<comment type="similarity">
    <text evidence="2">Belongs to the N(4)-acetylcytidine amidohydrolase family.</text>
</comment>
<gene>
    <name type="ordered locus">Sputw3181_1730</name>
</gene>
<proteinExistence type="inferred from homology"/>
<accession>A1RIS2</accession>